<keyword id="KW-0175">Coiled coil</keyword>
<keyword id="KW-0238">DNA-binding</keyword>
<keyword id="KW-0371">Homeobox</keyword>
<keyword id="KW-0539">Nucleus</keyword>
<keyword id="KW-1185">Reference proteome</keyword>
<keyword id="KW-0804">Transcription</keyword>
<keyword id="KW-0805">Transcription regulation</keyword>
<organism>
    <name type="scientific">Oryza sativa subsp. indica</name>
    <name type="common">Rice</name>
    <dbReference type="NCBI Taxonomy" id="39946"/>
    <lineage>
        <taxon>Eukaryota</taxon>
        <taxon>Viridiplantae</taxon>
        <taxon>Streptophyta</taxon>
        <taxon>Embryophyta</taxon>
        <taxon>Tracheophyta</taxon>
        <taxon>Spermatophyta</taxon>
        <taxon>Magnoliopsida</taxon>
        <taxon>Liliopsida</taxon>
        <taxon>Poales</taxon>
        <taxon>Poaceae</taxon>
        <taxon>BOP clade</taxon>
        <taxon>Oryzoideae</taxon>
        <taxon>Oryzeae</taxon>
        <taxon>Oryzinae</taxon>
        <taxon>Oryza</taxon>
        <taxon>Oryza sativa</taxon>
    </lineage>
</organism>
<comment type="function">
    <text evidence="1">Probable transcription factor.</text>
</comment>
<comment type="subcellular location">
    <subcellularLocation>
        <location evidence="6">Nucleus</location>
    </subcellularLocation>
</comment>
<comment type="tissue specificity">
    <text evidence="5">Expressed in roots, stems, leaf blades and panicles.</text>
</comment>
<comment type="similarity">
    <text evidence="6">Belongs to the HD-ZIP homeobox family. Class I subfamily.</text>
</comment>
<feature type="chain" id="PRO_0000331700" description="Homeobox-leucine zipper protein HOX14">
    <location>
        <begin position="1"/>
        <end position="244"/>
    </location>
</feature>
<feature type="DNA-binding region" description="Homeobox" evidence="3">
    <location>
        <begin position="59"/>
        <end position="118"/>
    </location>
</feature>
<feature type="region of interest" description="Disordered" evidence="4">
    <location>
        <begin position="25"/>
        <end position="64"/>
    </location>
</feature>
<feature type="coiled-coil region" evidence="2">
    <location>
        <begin position="108"/>
        <end position="167"/>
    </location>
</feature>
<feature type="compositionally biased region" description="Basic residues" evidence="4">
    <location>
        <begin position="35"/>
        <end position="44"/>
    </location>
</feature>
<feature type="compositionally biased region" description="Gly residues" evidence="4">
    <location>
        <begin position="46"/>
        <end position="56"/>
    </location>
</feature>
<reference key="1">
    <citation type="journal article" date="2005" name="PLoS Biol.">
        <title>The genomes of Oryza sativa: a history of duplications.</title>
        <authorList>
            <person name="Yu J."/>
            <person name="Wang J."/>
            <person name="Lin W."/>
            <person name="Li S."/>
            <person name="Li H."/>
            <person name="Zhou J."/>
            <person name="Ni P."/>
            <person name="Dong W."/>
            <person name="Hu S."/>
            <person name="Zeng C."/>
            <person name="Zhang J."/>
            <person name="Zhang Y."/>
            <person name="Li R."/>
            <person name="Xu Z."/>
            <person name="Li S."/>
            <person name="Li X."/>
            <person name="Zheng H."/>
            <person name="Cong L."/>
            <person name="Lin L."/>
            <person name="Yin J."/>
            <person name="Geng J."/>
            <person name="Li G."/>
            <person name="Shi J."/>
            <person name="Liu J."/>
            <person name="Lv H."/>
            <person name="Li J."/>
            <person name="Wang J."/>
            <person name="Deng Y."/>
            <person name="Ran L."/>
            <person name="Shi X."/>
            <person name="Wang X."/>
            <person name="Wu Q."/>
            <person name="Li C."/>
            <person name="Ren X."/>
            <person name="Wang J."/>
            <person name="Wang X."/>
            <person name="Li D."/>
            <person name="Liu D."/>
            <person name="Zhang X."/>
            <person name="Ji Z."/>
            <person name="Zhao W."/>
            <person name="Sun Y."/>
            <person name="Zhang Z."/>
            <person name="Bao J."/>
            <person name="Han Y."/>
            <person name="Dong L."/>
            <person name="Ji J."/>
            <person name="Chen P."/>
            <person name="Wu S."/>
            <person name="Liu J."/>
            <person name="Xiao Y."/>
            <person name="Bu D."/>
            <person name="Tan J."/>
            <person name="Yang L."/>
            <person name="Ye C."/>
            <person name="Zhang J."/>
            <person name="Xu J."/>
            <person name="Zhou Y."/>
            <person name="Yu Y."/>
            <person name="Zhang B."/>
            <person name="Zhuang S."/>
            <person name="Wei H."/>
            <person name="Liu B."/>
            <person name="Lei M."/>
            <person name="Yu H."/>
            <person name="Li Y."/>
            <person name="Xu H."/>
            <person name="Wei S."/>
            <person name="He X."/>
            <person name="Fang L."/>
            <person name="Zhang Z."/>
            <person name="Zhang Y."/>
            <person name="Huang X."/>
            <person name="Su Z."/>
            <person name="Tong W."/>
            <person name="Li J."/>
            <person name="Tong Z."/>
            <person name="Li S."/>
            <person name="Ye J."/>
            <person name="Wang L."/>
            <person name="Fang L."/>
            <person name="Lei T."/>
            <person name="Chen C.-S."/>
            <person name="Chen H.-C."/>
            <person name="Xu Z."/>
            <person name="Li H."/>
            <person name="Huang H."/>
            <person name="Zhang F."/>
            <person name="Xu H."/>
            <person name="Li N."/>
            <person name="Zhao C."/>
            <person name="Li S."/>
            <person name="Dong L."/>
            <person name="Huang Y."/>
            <person name="Li L."/>
            <person name="Xi Y."/>
            <person name="Qi Q."/>
            <person name="Li W."/>
            <person name="Zhang B."/>
            <person name="Hu W."/>
            <person name="Zhang Y."/>
            <person name="Tian X."/>
            <person name="Jiao Y."/>
            <person name="Liang X."/>
            <person name="Jin J."/>
            <person name="Gao L."/>
            <person name="Zheng W."/>
            <person name="Hao B."/>
            <person name="Liu S.-M."/>
            <person name="Wang W."/>
            <person name="Yuan L."/>
            <person name="Cao M."/>
            <person name="McDermott J."/>
            <person name="Samudrala R."/>
            <person name="Wang J."/>
            <person name="Wong G.K.-S."/>
            <person name="Yang H."/>
        </authorList>
    </citation>
    <scope>NUCLEOTIDE SEQUENCE [LARGE SCALE GENOMIC DNA]</scope>
    <source>
        <strain>cv. 93-11</strain>
    </source>
</reference>
<reference key="2">
    <citation type="journal article" date="2008" name="Plant Mol. Biol.">
        <title>A genome-wide survey of HD-Zip genes in rice and analysis of drought-responsive family members.</title>
        <authorList>
            <person name="Agalou A."/>
            <person name="Purwantomo S."/>
            <person name="Oevernaes E."/>
            <person name="Johannesson H."/>
            <person name="Zhu X."/>
            <person name="Estiati A."/>
            <person name="de Kam R.J."/>
            <person name="Engstroem P."/>
            <person name="Slamet-Loedin I.H."/>
            <person name="Zhu Z."/>
            <person name="Wang M."/>
            <person name="Xiong L."/>
            <person name="Meijer A.H."/>
            <person name="Ouwerkerk P.B.F."/>
        </authorList>
    </citation>
    <scope>NUCLEOTIDE SEQUENCE [MRNA] OF 1-155</scope>
    <scope>TISSUE SPECIFICITY</scope>
    <scope>GENE FAMILY</scope>
    <scope>NOMENCLATURE</scope>
    <source>
        <strain>cv. Minghui 86</strain>
    </source>
</reference>
<dbReference type="EMBL" id="CM000132">
    <property type="status" value="NOT_ANNOTATED_CDS"/>
    <property type="molecule type" value="Genomic_DNA"/>
</dbReference>
<dbReference type="EMBL" id="EF555535">
    <property type="protein sequence ID" value="ABQ57276.1"/>
    <property type="molecule type" value="mRNA"/>
</dbReference>
<dbReference type="SMR" id="A2YN17"/>
<dbReference type="STRING" id="39946.A2YN17"/>
<dbReference type="EnsemblPlants" id="OsIR64_07g0021300.01">
    <property type="protein sequence ID" value="OsIR64_07g0021300.01"/>
    <property type="gene ID" value="OsIR64_07g0021300"/>
</dbReference>
<dbReference type="EnsemblPlants" id="OsKYG_07g0020770.01">
    <property type="protein sequence ID" value="OsKYG_07g0020770.01"/>
    <property type="gene ID" value="OsKYG_07g0020770"/>
</dbReference>
<dbReference type="EnsemblPlants" id="OsLaMu_07g0020610.01">
    <property type="protein sequence ID" value="OsLaMu_07g0020610.01"/>
    <property type="gene ID" value="OsLaMu_07g0020610"/>
</dbReference>
<dbReference type="EnsemblPlants" id="OsMH63_07G020570_01">
    <property type="protein sequence ID" value="OsMH63_07G020570_01"/>
    <property type="gene ID" value="OsMH63_07G020570"/>
</dbReference>
<dbReference type="EnsemblPlants" id="OsPr106_07g0020870.01">
    <property type="protein sequence ID" value="OsPr106_07g0020870.01"/>
    <property type="gene ID" value="OsPr106_07g0020870"/>
</dbReference>
<dbReference type="EnsemblPlants" id="OsZS97_07G020490_01">
    <property type="protein sequence ID" value="OsZS97_07G020490_01"/>
    <property type="gene ID" value="OsZS97_07G020490"/>
</dbReference>
<dbReference type="Gramene" id="OsIR64_07g0021300.01">
    <property type="protein sequence ID" value="OsIR64_07g0021300.01"/>
    <property type="gene ID" value="OsIR64_07g0021300"/>
</dbReference>
<dbReference type="Gramene" id="OsKYG_07g0020770.01">
    <property type="protein sequence ID" value="OsKYG_07g0020770.01"/>
    <property type="gene ID" value="OsKYG_07g0020770"/>
</dbReference>
<dbReference type="Gramene" id="OsLaMu_07g0020610.01">
    <property type="protein sequence ID" value="OsLaMu_07g0020610.01"/>
    <property type="gene ID" value="OsLaMu_07g0020610"/>
</dbReference>
<dbReference type="Gramene" id="OsMH63_07G020570_01">
    <property type="protein sequence ID" value="OsMH63_07G020570_01"/>
    <property type="gene ID" value="OsMH63_07G020570"/>
</dbReference>
<dbReference type="Gramene" id="OsPr106_07g0020870.01">
    <property type="protein sequence ID" value="OsPr106_07g0020870.01"/>
    <property type="gene ID" value="OsPr106_07g0020870"/>
</dbReference>
<dbReference type="Gramene" id="OsZS97_07G020490_01">
    <property type="protein sequence ID" value="OsZS97_07G020490_01"/>
    <property type="gene ID" value="OsZS97_07G020490"/>
</dbReference>
<dbReference type="Proteomes" id="UP000007015">
    <property type="component" value="Chromosome 7"/>
</dbReference>
<dbReference type="GO" id="GO:0005634">
    <property type="term" value="C:nucleus"/>
    <property type="evidence" value="ECO:0007669"/>
    <property type="project" value="UniProtKB-SubCell"/>
</dbReference>
<dbReference type="GO" id="GO:0000981">
    <property type="term" value="F:DNA-binding transcription factor activity, RNA polymerase II-specific"/>
    <property type="evidence" value="ECO:0007669"/>
    <property type="project" value="InterPro"/>
</dbReference>
<dbReference type="GO" id="GO:0043565">
    <property type="term" value="F:sequence-specific DNA binding"/>
    <property type="evidence" value="ECO:0007669"/>
    <property type="project" value="TreeGrafter"/>
</dbReference>
<dbReference type="GO" id="GO:0045893">
    <property type="term" value="P:positive regulation of DNA-templated transcription"/>
    <property type="evidence" value="ECO:0007669"/>
    <property type="project" value="TreeGrafter"/>
</dbReference>
<dbReference type="CDD" id="cd00086">
    <property type="entry name" value="homeodomain"/>
    <property type="match status" value="1"/>
</dbReference>
<dbReference type="FunFam" id="1.10.10.60:FF:000241">
    <property type="entry name" value="homeobox-leucine zipper protein ATHB-40"/>
    <property type="match status" value="1"/>
</dbReference>
<dbReference type="Gene3D" id="1.10.10.60">
    <property type="entry name" value="Homeodomain-like"/>
    <property type="match status" value="1"/>
</dbReference>
<dbReference type="InterPro" id="IPR001356">
    <property type="entry name" value="HD"/>
</dbReference>
<dbReference type="InterPro" id="IPR045224">
    <property type="entry name" value="HDZip_class_I_plant"/>
</dbReference>
<dbReference type="InterPro" id="IPR017970">
    <property type="entry name" value="Homeobox_CS"/>
</dbReference>
<dbReference type="InterPro" id="IPR009057">
    <property type="entry name" value="Homeodomain-like_sf"/>
</dbReference>
<dbReference type="InterPro" id="IPR000047">
    <property type="entry name" value="HTH_motif"/>
</dbReference>
<dbReference type="PANTHER" id="PTHR24326">
    <property type="entry name" value="HOMEOBOX-LEUCINE ZIPPER PROTEIN"/>
    <property type="match status" value="1"/>
</dbReference>
<dbReference type="PANTHER" id="PTHR24326:SF527">
    <property type="entry name" value="HOMEOBOX-LEUCINE ZIPPER PROTEIN ATHB-40"/>
    <property type="match status" value="1"/>
</dbReference>
<dbReference type="Pfam" id="PF00046">
    <property type="entry name" value="Homeodomain"/>
    <property type="match status" value="1"/>
</dbReference>
<dbReference type="PRINTS" id="PR00031">
    <property type="entry name" value="HTHREPRESSR"/>
</dbReference>
<dbReference type="SMART" id="SM00389">
    <property type="entry name" value="HOX"/>
    <property type="match status" value="1"/>
</dbReference>
<dbReference type="SUPFAM" id="SSF46689">
    <property type="entry name" value="Homeodomain-like"/>
    <property type="match status" value="1"/>
</dbReference>
<dbReference type="PROSITE" id="PS00027">
    <property type="entry name" value="HOMEOBOX_1"/>
    <property type="match status" value="1"/>
</dbReference>
<dbReference type="PROSITE" id="PS50071">
    <property type="entry name" value="HOMEOBOX_2"/>
    <property type="match status" value="1"/>
</dbReference>
<name>HOX14_ORYSI</name>
<protein>
    <recommendedName>
        <fullName>Homeobox-leucine zipper protein HOX14</fullName>
    </recommendedName>
    <alternativeName>
        <fullName>HD-ZIP protein HOX14</fullName>
    </alternativeName>
    <alternativeName>
        <fullName>Homeodomain transcription factor HOX14</fullName>
    </alternativeName>
    <alternativeName>
        <fullName>OsHox14</fullName>
    </alternativeName>
</protein>
<gene>
    <name type="primary">HOX14</name>
    <name type="ORF">OsI_025710</name>
</gene>
<proteinExistence type="evidence at transcript level"/>
<sequence>MDRYGEKQQQQQMFASYVDASLLAASGEVQGERPRARRRRRRGARCVGGGGGGGEVDGGDPKKRRLSDEQVEMLELSFREERKLETGRKVHLASELGLDPKQVAVWFQNRRARHKSKLLEEEFSKLKHAHDAAILHKCHLENEVLRLKERLVVAEEEVRRLRSAAGSHTASGEGGDIMGLGGSGACVAGSPSSSFSTGTCQPPSFGGGGGGGDHLGDDDLVYVPEYGGYADNSVVEWFSLYGLI</sequence>
<accession>A2YN17</accession>
<accession>A5JPV0</accession>
<evidence type="ECO:0000250" key="1"/>
<evidence type="ECO:0000255" key="2"/>
<evidence type="ECO:0000255" key="3">
    <source>
        <dbReference type="PROSITE-ProRule" id="PRU00108"/>
    </source>
</evidence>
<evidence type="ECO:0000256" key="4">
    <source>
        <dbReference type="SAM" id="MobiDB-lite"/>
    </source>
</evidence>
<evidence type="ECO:0000269" key="5">
    <source>
    </source>
</evidence>
<evidence type="ECO:0000305" key="6"/>